<gene>
    <name evidence="2" type="primary">wuho</name>
    <name type="ORF">GI16109</name>
</gene>
<feature type="chain" id="PRO_0000370546" description="tRNA (guanine-N(7)-)-methyltransferase non-catalytic subunit wuho">
    <location>
        <begin position="1"/>
        <end position="383"/>
    </location>
</feature>
<feature type="repeat" description="WD 1">
    <location>
        <begin position="61"/>
        <end position="101"/>
    </location>
</feature>
<feature type="repeat" description="WD 2">
    <location>
        <begin position="105"/>
        <end position="144"/>
    </location>
</feature>
<feature type="repeat" description="WD 3">
    <location>
        <begin position="148"/>
        <end position="187"/>
    </location>
</feature>
<feature type="repeat" description="WD 4">
    <location>
        <begin position="191"/>
        <end position="231"/>
    </location>
</feature>
<feature type="repeat" description="WD 5">
    <location>
        <begin position="289"/>
        <end position="329"/>
    </location>
</feature>
<proteinExistence type="inferred from homology"/>
<name>WUHO_DROMO</name>
<accession>B4L6T9</accession>
<comment type="function">
    <text evidence="1 2">Required for the Mettl1-dependent formation of N(7)-methylguanine at position 46 (m7G46) in tRNA (By similarity). In the Mettl1-wuho methyltransferase complex, it is required to stabilize and induce conformational changes of the catalytic subunit (By similarity). Required for binding of nanos mRNA and repression of translation by the mei-P26-bgcn-bam-sxl complex. May cooperate with mei-P26 and nanos to derepress the BMP signaling pathway. May cooperate with mei-P26 to suppress expression of a subset of microRNAs. May cooperate with mei-P26 to regulate bam expression levels in germline cells during gametogenesis. Required to promote mitosis to meiosis transition during gametogenesis. May regulate germline cell division in part by regulating ribosome biogenesis (By similarity).</text>
</comment>
<comment type="pathway">
    <text evidence="2">tRNA modification; N(7)-methylguanine-tRNA biosynthesis.</text>
</comment>
<comment type="subunit">
    <text evidence="1 2">Forms a heterodimer with the catalytic subunit Mettl1 (By similarity). Interacts with mei-P26 and weakly interacts with bgcn; required for the function or formation of the mei-P26-bgcn-bam-sxl complex. Interacts with nanos; may be involved in mei-P26-dependent derepression of the BMP signaling pathway. Interacts with Myc; the interaction may be mediated by mei-P26 and may be involved in the regulation of ribosome biogenesis (By similarity).</text>
</comment>
<comment type="subcellular location">
    <subcellularLocation>
        <location evidence="1 2">Nucleus</location>
    </subcellularLocation>
    <subcellularLocation>
        <location evidence="1">Cytoplasm</location>
    </subcellularLocation>
    <text evidence="1">Localized to the nuclei of nurse cells, follicle cells and oocytes at early stages, from germarium to stage 4 egg chambers. Also present in the nuclei of spermatocytes and in the apical cells of the testes. In the cytoplasm of all germline and somatic cells of the ovary.</text>
</comment>
<comment type="tissue specificity">
    <text evidence="1">In testis, it is present at high level in hub cells, a niche for germline stem cells of testis. Ubiquitously expressed in all testicular cells throughout spermatogenesis. Ubiquitously expressed in all germline and somatic cells of the ovary.</text>
</comment>
<comment type="miscellaneous">
    <text evidence="1">Wuho means 'no progeny' in Chinese.</text>
</comment>
<comment type="similarity">
    <text evidence="2">Belongs to the WD repeat TRM82 family.</text>
</comment>
<organism>
    <name type="scientific">Drosophila mojavensis</name>
    <name type="common">Fruit fly</name>
    <dbReference type="NCBI Taxonomy" id="7230"/>
    <lineage>
        <taxon>Eukaryota</taxon>
        <taxon>Metazoa</taxon>
        <taxon>Ecdysozoa</taxon>
        <taxon>Arthropoda</taxon>
        <taxon>Hexapoda</taxon>
        <taxon>Insecta</taxon>
        <taxon>Pterygota</taxon>
        <taxon>Neoptera</taxon>
        <taxon>Endopterygota</taxon>
        <taxon>Diptera</taxon>
        <taxon>Brachycera</taxon>
        <taxon>Muscomorpha</taxon>
        <taxon>Ephydroidea</taxon>
        <taxon>Drosophilidae</taxon>
        <taxon>Drosophila</taxon>
    </lineage>
</organism>
<keyword id="KW-0963">Cytoplasm</keyword>
<keyword id="KW-0217">Developmental protein</keyword>
<keyword id="KW-0221">Differentiation</keyword>
<keyword id="KW-0539">Nucleus</keyword>
<keyword id="KW-0896">Oogenesis</keyword>
<keyword id="KW-1185">Reference proteome</keyword>
<keyword id="KW-0677">Repeat</keyword>
<keyword id="KW-0744">Spermatogenesis</keyword>
<keyword id="KW-0819">tRNA processing</keyword>
<keyword id="KW-0853">WD repeat</keyword>
<reference key="1">
    <citation type="journal article" date="2007" name="Nature">
        <title>Evolution of genes and genomes on the Drosophila phylogeny.</title>
        <authorList>
            <consortium name="Drosophila 12 genomes consortium"/>
        </authorList>
    </citation>
    <scope>NUCLEOTIDE SEQUENCE [LARGE SCALE GENOMIC DNA]</scope>
    <source>
        <strain>Tucson 15081-1352.22</strain>
    </source>
</reference>
<sequence>MTTIFYTEPELVLSHGRKVLFINPNDLQIFKDIEVPADLTTCGFKIEATDEGEPKATCGSNLEVSILNVCYSPDRQLIALTTVGQKALLLYKSRPEHALLLSVRALARASSALAFAPDSSSVLVTDKTGDCYQYDCVEVEAPPKLLLGHLSIVYDIVWTPDLKHIITCDRDDKIRVTNYPATHDIHSYCLGHKEFVSGLALLPGNEGLLISISGDKTLRLWNYLTGKEVLQQQLPAPAVRLQMRELIQSKRYLLAVLFYDHVEAIGLYELELKEAAWSIAKESLVRAEAGSWSISNFALTSDRIYVAGAVNERLTLRVYNSADGKQAESVPAGWLDMVMENFAEQTCVPEDLSAWFKKRYDNISEYMERKKRRIEDQQQQHQK</sequence>
<evidence type="ECO:0000250" key="1">
    <source>
        <dbReference type="UniProtKB" id="Q9W415"/>
    </source>
</evidence>
<evidence type="ECO:0000255" key="2">
    <source>
        <dbReference type="HAMAP-Rule" id="MF_03056"/>
    </source>
</evidence>
<dbReference type="EMBL" id="CH933812">
    <property type="protein sequence ID" value="EDW06085.1"/>
    <property type="molecule type" value="Genomic_DNA"/>
</dbReference>
<dbReference type="SMR" id="B4L6T9"/>
<dbReference type="FunCoup" id="B4L6T9">
    <property type="interactions" value="647"/>
</dbReference>
<dbReference type="EnsemblMetazoa" id="FBtr0166834">
    <property type="protein sequence ID" value="FBpp0165326"/>
    <property type="gene ID" value="FBgn0138858"/>
</dbReference>
<dbReference type="EnsemblMetazoa" id="XM_002011207.4">
    <property type="protein sequence ID" value="XP_002011243.1"/>
    <property type="gene ID" value="LOC6585615"/>
</dbReference>
<dbReference type="GeneID" id="6585615"/>
<dbReference type="KEGG" id="dmo:Dmoj_GI16109"/>
<dbReference type="CTD" id="31566"/>
<dbReference type="eggNOG" id="KOG3914">
    <property type="taxonomic scope" value="Eukaryota"/>
</dbReference>
<dbReference type="HOGENOM" id="CLU_054270_0_0_1"/>
<dbReference type="InParanoid" id="B4L6T9"/>
<dbReference type="OMA" id="SVWFKKR"/>
<dbReference type="OrthoDB" id="371245at2759"/>
<dbReference type="PhylomeDB" id="B4L6T9"/>
<dbReference type="UniPathway" id="UPA00989"/>
<dbReference type="Proteomes" id="UP000009192">
    <property type="component" value="Unassembled WGS sequence"/>
</dbReference>
<dbReference type="GO" id="GO:0005829">
    <property type="term" value="C:cytosol"/>
    <property type="evidence" value="ECO:0007669"/>
    <property type="project" value="TreeGrafter"/>
</dbReference>
<dbReference type="GO" id="GO:0001674">
    <property type="term" value="C:female germ cell nucleus"/>
    <property type="evidence" value="ECO:0000250"/>
    <property type="project" value="UniProtKB"/>
</dbReference>
<dbReference type="GO" id="GO:0001673">
    <property type="term" value="C:male germ cell nucleus"/>
    <property type="evidence" value="ECO:0000250"/>
    <property type="project" value="UniProtKB"/>
</dbReference>
<dbReference type="GO" id="GO:0005634">
    <property type="term" value="C:nucleus"/>
    <property type="evidence" value="ECO:0000250"/>
    <property type="project" value="UniProtKB"/>
</dbReference>
<dbReference type="GO" id="GO:0043527">
    <property type="term" value="C:tRNA methyltransferase complex"/>
    <property type="evidence" value="ECO:0007669"/>
    <property type="project" value="TreeGrafter"/>
</dbReference>
<dbReference type="GO" id="GO:0048477">
    <property type="term" value="P:oogenesis"/>
    <property type="evidence" value="ECO:0000250"/>
    <property type="project" value="UniProtKB"/>
</dbReference>
<dbReference type="GO" id="GO:0007283">
    <property type="term" value="P:spermatogenesis"/>
    <property type="evidence" value="ECO:0000250"/>
    <property type="project" value="UniProtKB"/>
</dbReference>
<dbReference type="GO" id="GO:0106004">
    <property type="term" value="P:tRNA (guanine-N7)-methylation"/>
    <property type="evidence" value="ECO:0007669"/>
    <property type="project" value="UniProtKB-UniRule"/>
</dbReference>
<dbReference type="FunFam" id="2.130.10.10:FF:002617">
    <property type="entry name" value="tRNA (guanine-N(7)-)-methyltransferase non-catalytic subunit wuho"/>
    <property type="match status" value="1"/>
</dbReference>
<dbReference type="Gene3D" id="2.130.10.10">
    <property type="entry name" value="YVTN repeat-like/Quinoprotein amine dehydrogenase"/>
    <property type="match status" value="1"/>
</dbReference>
<dbReference type="HAMAP" id="MF_03056">
    <property type="entry name" value="TRM82"/>
    <property type="match status" value="1"/>
</dbReference>
<dbReference type="InterPro" id="IPR028884">
    <property type="entry name" value="Trm82"/>
</dbReference>
<dbReference type="InterPro" id="IPR015943">
    <property type="entry name" value="WD40/YVTN_repeat-like_dom_sf"/>
</dbReference>
<dbReference type="InterPro" id="IPR036322">
    <property type="entry name" value="WD40_repeat_dom_sf"/>
</dbReference>
<dbReference type="InterPro" id="IPR001680">
    <property type="entry name" value="WD40_rpt"/>
</dbReference>
<dbReference type="PANTHER" id="PTHR16288:SF0">
    <property type="entry name" value="TRNA (GUANINE-N(7)-)-METHYLTRANSFERASE NON-CATALYTIC SUBUNIT WDR4"/>
    <property type="match status" value="1"/>
</dbReference>
<dbReference type="PANTHER" id="PTHR16288">
    <property type="entry name" value="WD40 REPEAT PROTEIN 4"/>
    <property type="match status" value="1"/>
</dbReference>
<dbReference type="Pfam" id="PF00400">
    <property type="entry name" value="WD40"/>
    <property type="match status" value="2"/>
</dbReference>
<dbReference type="SMART" id="SM00320">
    <property type="entry name" value="WD40"/>
    <property type="match status" value="3"/>
</dbReference>
<dbReference type="SUPFAM" id="SSF50978">
    <property type="entry name" value="WD40 repeat-like"/>
    <property type="match status" value="1"/>
</dbReference>
<dbReference type="PROSITE" id="PS50082">
    <property type="entry name" value="WD_REPEATS_2"/>
    <property type="match status" value="1"/>
</dbReference>
<dbReference type="PROSITE" id="PS50294">
    <property type="entry name" value="WD_REPEATS_REGION"/>
    <property type="match status" value="1"/>
</dbReference>
<protein>
    <recommendedName>
        <fullName evidence="2">tRNA (guanine-N(7)-)-methyltransferase non-catalytic subunit wuho</fullName>
    </recommendedName>
</protein>